<comment type="function">
    <text evidence="1">Binds 23S rRNA and is also seen to make contacts with the A and possibly P site tRNAs.</text>
</comment>
<comment type="subunit">
    <text evidence="1">Part of the 50S ribosomal subunit.</text>
</comment>
<comment type="similarity">
    <text evidence="1">Belongs to the universal ribosomal protein uL16 family.</text>
</comment>
<proteinExistence type="inferred from homology"/>
<protein>
    <recommendedName>
        <fullName evidence="1">Large ribosomal subunit protein uL16</fullName>
    </recommendedName>
    <alternativeName>
        <fullName evidence="2">50S ribosomal protein L16</fullName>
    </alternativeName>
</protein>
<gene>
    <name evidence="1" type="primary">rplP</name>
    <name type="ordered locus">ECP_3401</name>
</gene>
<sequence>MLQPKRTKFRKMHKGRNRGLAQGTDVSFGSFGLKAVGRGRLTARQIEAARRAMTRAVKRQGKIWIRVFPDKPITEKPLAVRMGKGKGNVEYWVALIQPGKVLYEMDGVPEELAREAFKLAAAKLPIKTTFVTKTVM</sequence>
<dbReference type="EMBL" id="CP000247">
    <property type="protein sequence ID" value="ABG71381.1"/>
    <property type="molecule type" value="Genomic_DNA"/>
</dbReference>
<dbReference type="RefSeq" id="WP_000941212.1">
    <property type="nucleotide sequence ID" value="NC_008253.1"/>
</dbReference>
<dbReference type="SMR" id="Q0TCE8"/>
<dbReference type="GeneID" id="93778674"/>
<dbReference type="KEGG" id="ecp:ECP_3401"/>
<dbReference type="HOGENOM" id="CLU_078858_2_1_6"/>
<dbReference type="Proteomes" id="UP000009182">
    <property type="component" value="Chromosome"/>
</dbReference>
<dbReference type="GO" id="GO:0022625">
    <property type="term" value="C:cytosolic large ribosomal subunit"/>
    <property type="evidence" value="ECO:0007669"/>
    <property type="project" value="TreeGrafter"/>
</dbReference>
<dbReference type="GO" id="GO:0019843">
    <property type="term" value="F:rRNA binding"/>
    <property type="evidence" value="ECO:0007669"/>
    <property type="project" value="UniProtKB-UniRule"/>
</dbReference>
<dbReference type="GO" id="GO:0003735">
    <property type="term" value="F:structural constituent of ribosome"/>
    <property type="evidence" value="ECO:0007669"/>
    <property type="project" value="InterPro"/>
</dbReference>
<dbReference type="GO" id="GO:0000049">
    <property type="term" value="F:tRNA binding"/>
    <property type="evidence" value="ECO:0007669"/>
    <property type="project" value="UniProtKB-KW"/>
</dbReference>
<dbReference type="GO" id="GO:0006412">
    <property type="term" value="P:translation"/>
    <property type="evidence" value="ECO:0007669"/>
    <property type="project" value="UniProtKB-UniRule"/>
</dbReference>
<dbReference type="CDD" id="cd01433">
    <property type="entry name" value="Ribosomal_L16_L10e"/>
    <property type="match status" value="1"/>
</dbReference>
<dbReference type="FunFam" id="3.90.1170.10:FF:000001">
    <property type="entry name" value="50S ribosomal protein L16"/>
    <property type="match status" value="1"/>
</dbReference>
<dbReference type="Gene3D" id="3.90.1170.10">
    <property type="entry name" value="Ribosomal protein L10e/L16"/>
    <property type="match status" value="1"/>
</dbReference>
<dbReference type="HAMAP" id="MF_01342">
    <property type="entry name" value="Ribosomal_uL16"/>
    <property type="match status" value="1"/>
</dbReference>
<dbReference type="InterPro" id="IPR047873">
    <property type="entry name" value="Ribosomal_uL16"/>
</dbReference>
<dbReference type="InterPro" id="IPR000114">
    <property type="entry name" value="Ribosomal_uL16_bact-type"/>
</dbReference>
<dbReference type="InterPro" id="IPR020798">
    <property type="entry name" value="Ribosomal_uL16_CS"/>
</dbReference>
<dbReference type="InterPro" id="IPR016180">
    <property type="entry name" value="Ribosomal_uL16_dom"/>
</dbReference>
<dbReference type="InterPro" id="IPR036920">
    <property type="entry name" value="Ribosomal_uL16_sf"/>
</dbReference>
<dbReference type="NCBIfam" id="TIGR01164">
    <property type="entry name" value="rplP_bact"/>
    <property type="match status" value="1"/>
</dbReference>
<dbReference type="PANTHER" id="PTHR12220">
    <property type="entry name" value="50S/60S RIBOSOMAL PROTEIN L16"/>
    <property type="match status" value="1"/>
</dbReference>
<dbReference type="PANTHER" id="PTHR12220:SF13">
    <property type="entry name" value="LARGE RIBOSOMAL SUBUNIT PROTEIN UL16M"/>
    <property type="match status" value="1"/>
</dbReference>
<dbReference type="Pfam" id="PF00252">
    <property type="entry name" value="Ribosomal_L16"/>
    <property type="match status" value="1"/>
</dbReference>
<dbReference type="PRINTS" id="PR00060">
    <property type="entry name" value="RIBOSOMALL16"/>
</dbReference>
<dbReference type="SUPFAM" id="SSF54686">
    <property type="entry name" value="Ribosomal protein L16p/L10e"/>
    <property type="match status" value="1"/>
</dbReference>
<dbReference type="PROSITE" id="PS00586">
    <property type="entry name" value="RIBOSOMAL_L16_1"/>
    <property type="match status" value="1"/>
</dbReference>
<dbReference type="PROSITE" id="PS00701">
    <property type="entry name" value="RIBOSOMAL_L16_2"/>
    <property type="match status" value="1"/>
</dbReference>
<feature type="chain" id="PRO_0000251634" description="Large ribosomal subunit protein uL16">
    <location>
        <begin position="1"/>
        <end position="136"/>
    </location>
</feature>
<evidence type="ECO:0000255" key="1">
    <source>
        <dbReference type="HAMAP-Rule" id="MF_01342"/>
    </source>
</evidence>
<evidence type="ECO:0000305" key="2"/>
<name>RL16_ECOL5</name>
<keyword id="KW-0687">Ribonucleoprotein</keyword>
<keyword id="KW-0689">Ribosomal protein</keyword>
<keyword id="KW-0694">RNA-binding</keyword>
<keyword id="KW-0699">rRNA-binding</keyword>
<keyword id="KW-0820">tRNA-binding</keyword>
<accession>Q0TCE8</accession>
<organism>
    <name type="scientific">Escherichia coli O6:K15:H31 (strain 536 / UPEC)</name>
    <dbReference type="NCBI Taxonomy" id="362663"/>
    <lineage>
        <taxon>Bacteria</taxon>
        <taxon>Pseudomonadati</taxon>
        <taxon>Pseudomonadota</taxon>
        <taxon>Gammaproteobacteria</taxon>
        <taxon>Enterobacterales</taxon>
        <taxon>Enterobacteriaceae</taxon>
        <taxon>Escherichia</taxon>
    </lineage>
</organism>
<reference key="1">
    <citation type="journal article" date="2006" name="Mol. Microbiol.">
        <title>Role of pathogenicity island-associated integrases in the genome plasticity of uropathogenic Escherichia coli strain 536.</title>
        <authorList>
            <person name="Hochhut B."/>
            <person name="Wilde C."/>
            <person name="Balling G."/>
            <person name="Middendorf B."/>
            <person name="Dobrindt U."/>
            <person name="Brzuszkiewicz E."/>
            <person name="Gottschalk G."/>
            <person name="Carniel E."/>
            <person name="Hacker J."/>
        </authorList>
    </citation>
    <scope>NUCLEOTIDE SEQUENCE [LARGE SCALE GENOMIC DNA]</scope>
    <source>
        <strain>536 / UPEC</strain>
    </source>
</reference>